<reference key="1">
    <citation type="journal article" date="2003" name="Mol. Microbiol.">
        <title>An integrated analysis of the genome of the hyperthermophilic archaeon Pyrococcus abyssi.</title>
        <authorList>
            <person name="Cohen G.N."/>
            <person name="Barbe V."/>
            <person name="Flament D."/>
            <person name="Galperin M."/>
            <person name="Heilig R."/>
            <person name="Lecompte O."/>
            <person name="Poch O."/>
            <person name="Prieur D."/>
            <person name="Querellou J."/>
            <person name="Ripp R."/>
            <person name="Thierry J.-C."/>
            <person name="Van der Oost J."/>
            <person name="Weissenbach J."/>
            <person name="Zivanovic Y."/>
            <person name="Forterre P."/>
        </authorList>
    </citation>
    <scope>NUCLEOTIDE SEQUENCE [LARGE SCALE GENOMIC DNA]</scope>
    <source>
        <strain>GE5 / Orsay</strain>
    </source>
</reference>
<reference key="2">
    <citation type="journal article" date="2012" name="Curr. Microbiol.">
        <title>Re-annotation of two hyperthermophilic archaea Pyrococcus abyssi GE5 and Pyrococcus furiosus DSM 3638.</title>
        <authorList>
            <person name="Gao J."/>
            <person name="Wang J."/>
        </authorList>
    </citation>
    <scope>GENOME REANNOTATION</scope>
    <source>
        <strain>GE5 / Orsay</strain>
    </source>
</reference>
<sequence length="260" mass="29647">MIEFKDVWFWYDDGKYVLKSINFRFKGGTLAIVGPNGSGKTTLVKMMNGLLKPKKGDVIIDGINTRDKSVAEMSRLVGYVFQNPDAMFFEENVFKEVAFGPRNLGLSEEEVEKRVRWALREVGLEGFEDRSPLELSGGEKQRLAIACILAMKPKYLVLDEPNTGLDERGLRGLINVIRKLREDNHSIILVTHDMELVLEVADEVLLLKDGEIKFFGPVEDFFKLDLRNFSLVEPEIIKIAKELKLRFVRNVDELIKVIGL</sequence>
<comment type="function">
    <text evidence="1">Probably part of an ABC transporter complex. Responsible for energy coupling to the transport system (By similarity).</text>
</comment>
<comment type="subcellular location">
    <subcellularLocation>
        <location evidence="1">Cell membrane</location>
        <topology evidence="1">Peripheral membrane protein</topology>
    </subcellularLocation>
</comment>
<comment type="similarity">
    <text evidence="3">Belongs to the ABC transporter superfamily.</text>
</comment>
<dbReference type="EC" id="7.-.-.-"/>
<dbReference type="EMBL" id="AJ248283">
    <property type="protein sequence ID" value="CAB49054.1"/>
    <property type="molecule type" value="Genomic_DNA"/>
</dbReference>
<dbReference type="EMBL" id="HE613800">
    <property type="protein sequence ID" value="CCE69506.1"/>
    <property type="molecule type" value="Genomic_DNA"/>
</dbReference>
<dbReference type="PIR" id="G75200">
    <property type="entry name" value="G75200"/>
</dbReference>
<dbReference type="RefSeq" id="WP_010867254.1">
    <property type="nucleotide sequence ID" value="NC_000868.1"/>
</dbReference>
<dbReference type="SMR" id="Q9V2E4"/>
<dbReference type="STRING" id="272844.PAB2260"/>
<dbReference type="KEGG" id="pab:PAB2260"/>
<dbReference type="PATRIC" id="fig|272844.11.peg.142"/>
<dbReference type="eggNOG" id="arCOG00202">
    <property type="taxonomic scope" value="Archaea"/>
</dbReference>
<dbReference type="HOGENOM" id="CLU_000604_1_22_2"/>
<dbReference type="OrthoDB" id="35850at2157"/>
<dbReference type="PhylomeDB" id="Q9V2E4"/>
<dbReference type="Proteomes" id="UP000000810">
    <property type="component" value="Chromosome"/>
</dbReference>
<dbReference type="Proteomes" id="UP000009139">
    <property type="component" value="Chromosome"/>
</dbReference>
<dbReference type="GO" id="GO:0043190">
    <property type="term" value="C:ATP-binding cassette (ABC) transporter complex"/>
    <property type="evidence" value="ECO:0007669"/>
    <property type="project" value="TreeGrafter"/>
</dbReference>
<dbReference type="GO" id="GO:0005524">
    <property type="term" value="F:ATP binding"/>
    <property type="evidence" value="ECO:0007669"/>
    <property type="project" value="UniProtKB-KW"/>
</dbReference>
<dbReference type="GO" id="GO:0016887">
    <property type="term" value="F:ATP hydrolysis activity"/>
    <property type="evidence" value="ECO:0007669"/>
    <property type="project" value="InterPro"/>
</dbReference>
<dbReference type="GO" id="GO:0042626">
    <property type="term" value="F:ATPase-coupled transmembrane transporter activity"/>
    <property type="evidence" value="ECO:0007669"/>
    <property type="project" value="TreeGrafter"/>
</dbReference>
<dbReference type="GO" id="GO:0006824">
    <property type="term" value="P:cobalt ion transport"/>
    <property type="evidence" value="ECO:0007669"/>
    <property type="project" value="InterPro"/>
</dbReference>
<dbReference type="CDD" id="cd03225">
    <property type="entry name" value="ABC_cobalt_CbiO_domain1"/>
    <property type="match status" value="1"/>
</dbReference>
<dbReference type="FunFam" id="3.40.50.300:FF:000224">
    <property type="entry name" value="Energy-coupling factor transporter ATP-binding protein EcfA"/>
    <property type="match status" value="1"/>
</dbReference>
<dbReference type="Gene3D" id="3.40.50.300">
    <property type="entry name" value="P-loop containing nucleotide triphosphate hydrolases"/>
    <property type="match status" value="1"/>
</dbReference>
<dbReference type="InterPro" id="IPR003593">
    <property type="entry name" value="AAA+_ATPase"/>
</dbReference>
<dbReference type="InterPro" id="IPR003439">
    <property type="entry name" value="ABC_transporter-like_ATP-bd"/>
</dbReference>
<dbReference type="InterPro" id="IPR017871">
    <property type="entry name" value="ABC_transporter-like_CS"/>
</dbReference>
<dbReference type="InterPro" id="IPR015856">
    <property type="entry name" value="ABC_transpr_CbiO/EcfA_su"/>
</dbReference>
<dbReference type="InterPro" id="IPR005876">
    <property type="entry name" value="Co_trans_ATP-bd"/>
</dbReference>
<dbReference type="InterPro" id="IPR050095">
    <property type="entry name" value="ECF_ABC_transporter_ATP-bd"/>
</dbReference>
<dbReference type="InterPro" id="IPR027417">
    <property type="entry name" value="P-loop_NTPase"/>
</dbReference>
<dbReference type="NCBIfam" id="TIGR01166">
    <property type="entry name" value="cbiO"/>
    <property type="match status" value="1"/>
</dbReference>
<dbReference type="PANTHER" id="PTHR43553:SF25">
    <property type="entry name" value="ABC-TYPE COBALT TRANSPORT SYSTEM, ATPASE COMPONENT"/>
    <property type="match status" value="1"/>
</dbReference>
<dbReference type="PANTHER" id="PTHR43553">
    <property type="entry name" value="HEAVY METAL TRANSPORTER"/>
    <property type="match status" value="1"/>
</dbReference>
<dbReference type="Pfam" id="PF00005">
    <property type="entry name" value="ABC_tran"/>
    <property type="match status" value="1"/>
</dbReference>
<dbReference type="SMART" id="SM00382">
    <property type="entry name" value="AAA"/>
    <property type="match status" value="1"/>
</dbReference>
<dbReference type="SUPFAM" id="SSF52540">
    <property type="entry name" value="P-loop containing nucleoside triphosphate hydrolases"/>
    <property type="match status" value="1"/>
</dbReference>
<dbReference type="PROSITE" id="PS00211">
    <property type="entry name" value="ABC_TRANSPORTER_1"/>
    <property type="match status" value="1"/>
</dbReference>
<dbReference type="PROSITE" id="PS50893">
    <property type="entry name" value="ABC_TRANSPORTER_2"/>
    <property type="match status" value="1"/>
</dbReference>
<keyword id="KW-0067">ATP-binding</keyword>
<keyword id="KW-1003">Cell membrane</keyword>
<keyword id="KW-0472">Membrane</keyword>
<keyword id="KW-0547">Nucleotide-binding</keyword>
<keyword id="KW-1278">Translocase</keyword>
<keyword id="KW-0813">Transport</keyword>
<accession>Q9V2E4</accession>
<accession>G8ZFW5</accession>
<organism>
    <name type="scientific">Pyrococcus abyssi (strain GE5 / Orsay)</name>
    <dbReference type="NCBI Taxonomy" id="272844"/>
    <lineage>
        <taxon>Archaea</taxon>
        <taxon>Methanobacteriati</taxon>
        <taxon>Methanobacteriota</taxon>
        <taxon>Thermococci</taxon>
        <taxon>Thermococcales</taxon>
        <taxon>Thermococcaceae</taxon>
        <taxon>Pyrococcus</taxon>
    </lineage>
</organism>
<name>Y130_PYRAB</name>
<evidence type="ECO:0000250" key="1"/>
<evidence type="ECO:0000255" key="2">
    <source>
        <dbReference type="PROSITE-ProRule" id="PRU00434"/>
    </source>
</evidence>
<evidence type="ECO:0000305" key="3"/>
<feature type="chain" id="PRO_0000092155" description="Putative ABC transporter ATP-binding protein PYRAB01300">
    <location>
        <begin position="1"/>
        <end position="260"/>
    </location>
</feature>
<feature type="domain" description="ABC transporter" evidence="2">
    <location>
        <begin position="2"/>
        <end position="234"/>
    </location>
</feature>
<feature type="binding site" evidence="2">
    <location>
        <begin position="34"/>
        <end position="41"/>
    </location>
    <ligand>
        <name>ATP</name>
        <dbReference type="ChEBI" id="CHEBI:30616"/>
    </ligand>
</feature>
<gene>
    <name type="ordered locus">PYRAB01300</name>
    <name type="ORF">PAB2260</name>
</gene>
<proteinExistence type="inferred from homology"/>
<protein>
    <recommendedName>
        <fullName>Putative ABC transporter ATP-binding protein PYRAB01300</fullName>
        <ecNumber>7.-.-.-</ecNumber>
    </recommendedName>
</protein>